<accession>A0A0H4K9X4</accession>
<dbReference type="EC" id="1.14.99.56" evidence="4 5"/>
<dbReference type="EMBL" id="KP901251">
    <property type="protein sequence ID" value="AKO82493.1"/>
    <property type="molecule type" value="mRNA"/>
</dbReference>
<dbReference type="SMR" id="A0A0H4K9X4"/>
<dbReference type="VEuPathDB" id="FungiDB:MYCTH_85556"/>
<dbReference type="OMA" id="LMRNEHI"/>
<dbReference type="BioCyc" id="MetaCyc:MONOMER-20044"/>
<dbReference type="BRENDA" id="1.14.99.54">
    <property type="organism ID" value="13804"/>
</dbReference>
<dbReference type="GO" id="GO:0005576">
    <property type="term" value="C:extracellular region"/>
    <property type="evidence" value="ECO:0007669"/>
    <property type="project" value="UniProtKB-SubCell"/>
</dbReference>
<dbReference type="GO" id="GO:0046872">
    <property type="term" value="F:metal ion binding"/>
    <property type="evidence" value="ECO:0007669"/>
    <property type="project" value="UniProtKB-KW"/>
</dbReference>
<dbReference type="GO" id="GO:0004497">
    <property type="term" value="F:monooxygenase activity"/>
    <property type="evidence" value="ECO:0007669"/>
    <property type="project" value="UniProtKB-KW"/>
</dbReference>
<dbReference type="GO" id="GO:0030245">
    <property type="term" value="P:cellulose catabolic process"/>
    <property type="evidence" value="ECO:0007669"/>
    <property type="project" value="UniProtKB-KW"/>
</dbReference>
<dbReference type="CDD" id="cd21175">
    <property type="entry name" value="LPMO_AA9"/>
    <property type="match status" value="1"/>
</dbReference>
<dbReference type="Gene3D" id="2.70.50.70">
    <property type="match status" value="1"/>
</dbReference>
<dbReference type="InterPro" id="IPR049892">
    <property type="entry name" value="AA9"/>
</dbReference>
<dbReference type="InterPro" id="IPR005103">
    <property type="entry name" value="AA9_LPMO"/>
</dbReference>
<dbReference type="PANTHER" id="PTHR33353:SF3">
    <property type="entry name" value="ENDOGLUCANASE II"/>
    <property type="match status" value="1"/>
</dbReference>
<dbReference type="PANTHER" id="PTHR33353">
    <property type="entry name" value="PUTATIVE (AFU_ORTHOLOGUE AFUA_1G12560)-RELATED"/>
    <property type="match status" value="1"/>
</dbReference>
<dbReference type="Pfam" id="PF03443">
    <property type="entry name" value="AA9"/>
    <property type="match status" value="1"/>
</dbReference>
<reference key="1">
    <citation type="journal article" date="2015" name="Biotechnol. Biofuels">
        <title>Discovery of the combined oxidative cleavage of plant xylan and cellulose by a new fungal polysaccharide monooxygenase.</title>
        <authorList>
            <person name="Frommhagen M."/>
            <person name="Sforza S."/>
            <person name="Westphal A.H."/>
            <person name="Visser J."/>
            <person name="Hinz S.W."/>
            <person name="Koetsier M.J."/>
            <person name="van Berkel W.J."/>
            <person name="Gruppen H."/>
            <person name="Kabel M.A."/>
        </authorList>
    </citation>
    <scope>NUCLEOTIDE SEQUENCE [MRNA]</scope>
    <scope>FUNCTION</scope>
    <scope>CATALYTIC ACTIVITY</scope>
    <scope>BIOTECHNOLOGY</scope>
    <source>
        <strain>C1</strain>
    </source>
</reference>
<reference key="2">
    <citation type="journal article" date="2016" name="Biotechnol. Biofuels">
        <title>Lytic polysaccharide monooxygenases from Myceliophthora thermophila C1 differ in substrate preference and reducing agent specificity.</title>
        <authorList>
            <person name="Frommhagen M."/>
            <person name="Koetsier M.J."/>
            <person name="Westphal A.H."/>
            <person name="Visser J."/>
            <person name="Hinz S.W."/>
            <person name="Vincken J.P."/>
            <person name="van Berkel W.J."/>
            <person name="Kabel M.A."/>
            <person name="Gruppen H."/>
        </authorList>
    </citation>
    <scope>FUNCTION</scope>
    <scope>CATALYTIC ACTIVITY</scope>
    <scope>ACTIVITY REGULATION</scope>
    <scope>BIOTECHNOLOGY</scope>
</reference>
<organism>
    <name type="scientific">Thermothelomyces thermophilus</name>
    <name type="common">Myceliophthora thermophila</name>
    <dbReference type="NCBI Taxonomy" id="78579"/>
    <lineage>
        <taxon>Eukaryota</taxon>
        <taxon>Fungi</taxon>
        <taxon>Dikarya</taxon>
        <taxon>Ascomycota</taxon>
        <taxon>Pezizomycotina</taxon>
        <taxon>Sordariomycetes</taxon>
        <taxon>Sordariomycetidae</taxon>
        <taxon>Sordariales</taxon>
        <taxon>Chaetomiaceae</taxon>
        <taxon>Thermothelomyces</taxon>
    </lineage>
</organism>
<protein>
    <recommendedName>
        <fullName evidence="6">AA9 family lytic polysaccharide monooxygenase A</fullName>
        <shortName evidence="6">LPMO9A</shortName>
        <ecNumber evidence="4 5">1.14.99.56</ecNumber>
    </recommendedName>
    <alternativeName>
        <fullName evidence="7">Cellulase LPMO9A</fullName>
    </alternativeName>
    <alternativeName>
        <fullName evidence="7">Endo-beta-1,4-glucanase LPMO9A</fullName>
        <shortName evidence="7">Endoglucanase LPMO9A</shortName>
    </alternativeName>
    <alternativeName>
        <fullName evidence="7">Glycosyl hydrolase 61 family protein LPMO9A</fullName>
    </alternativeName>
</protein>
<name>LP9A_THETO</name>
<gene>
    <name evidence="6" type="primary">LPMO9A</name>
</gene>
<feature type="signal peptide" evidence="3">
    <location>
        <begin position="1"/>
        <end position="17"/>
    </location>
</feature>
<feature type="chain" id="PRO_5005206622" description="AA9 family lytic polysaccharide monooxygenase A">
    <location>
        <begin position="18"/>
        <end position="225"/>
    </location>
</feature>
<feature type="binding site" evidence="1">
    <location>
        <position position="18"/>
    </location>
    <ligand>
        <name>Cu(2+)</name>
        <dbReference type="ChEBI" id="CHEBI:29036"/>
        <note>catalytic</note>
    </ligand>
</feature>
<feature type="binding site" evidence="1">
    <location>
        <position position="85"/>
    </location>
    <ligand>
        <name>Cu(2+)</name>
        <dbReference type="ChEBI" id="CHEBI:29036"/>
        <note>catalytic</note>
    </ligand>
</feature>
<feature type="binding site" evidence="1">
    <location>
        <position position="159"/>
    </location>
    <ligand>
        <name>O2</name>
        <dbReference type="ChEBI" id="CHEBI:15379"/>
    </ligand>
</feature>
<feature type="binding site" evidence="1">
    <location>
        <position position="168"/>
    </location>
    <ligand>
        <name>O2</name>
        <dbReference type="ChEBI" id="CHEBI:15379"/>
    </ligand>
</feature>
<feature type="binding site" evidence="1">
    <location>
        <position position="170"/>
    </location>
    <ligand>
        <name>Cu(2+)</name>
        <dbReference type="ChEBI" id="CHEBI:29036"/>
        <note>catalytic</note>
    </ligand>
</feature>
<feature type="disulfide bond" evidence="2">
    <location>
        <begin position="55"/>
        <end position="173"/>
    </location>
</feature>
<feature type="disulfide bond" evidence="2">
    <location>
        <begin position="143"/>
        <end position="225"/>
    </location>
</feature>
<comment type="function">
    <text evidence="4 5">Lytic polysaccharide monooxygenase (LPMO) that depolymerizes crystalline and amorphous polysaccharides via the oxidation of scissile alpha- or beta-(1-4)-glycosidic bonds, yielding C1 or C4 oxidation products (PubMed:26185526, PubMed:27588039). Catalysis by LPMOs requires the reduction of the active-site copper from Cu(II) to Cu(I) by a reducing agent and H(2)O(2) or O(2) as a cosubstrate (PubMed:27588039). Shows oxidative cleavage of xylan in addition to cellulose (PubMed:26185526). Shows a strong synergistic effect with endoglucanase I (EGI) with a 16-fold higher release of detected oligosaccharides (PubMed:26185526).</text>
</comment>
<comment type="catalytic activity">
    <reaction evidence="4 5">
        <text>[(1-&gt;4)-beta-D-glucosyl]n+m + reduced acceptor + O2 = 4-dehydro-beta-D-glucosyl-[(1-&gt;4)-beta-D-glucosyl]n-1 + [(1-&gt;4)-beta-D-glucosyl]m + acceptor + H2O.</text>
        <dbReference type="EC" id="1.14.99.56"/>
    </reaction>
</comment>
<comment type="cofactor">
    <cofactor evidence="9">
        <name>Cu(2+)</name>
        <dbReference type="ChEBI" id="CHEBI:29036"/>
    </cofactor>
    <text evidence="9">Binds 1 copper ion per subunit.</text>
</comment>
<comment type="activity regulation">
    <text evidence="5">Is able to utilize various natural phenolic compounds as reducing agents. Most of these reducing agents are present in plants, either free or as lignin building blocks, such as sinapic acid, or as flavonoids such as catechin and dopamine (PubMed:27588039). Phenolic compounds with 1,2-benzenediol and 1,2,3-benzenetriol moieties yield the highest release of oxidized and non-oxidized glucooligosaccharides from cellulose compared to monophenols or sulfur-containing compounds (PubMed:27588039).</text>
</comment>
<comment type="subcellular location">
    <subcellularLocation>
        <location evidence="8">Secreted</location>
    </subcellularLocation>
</comment>
<comment type="biotechnology">
    <text evidence="4 5">Lignocellulose is the most abundant polymeric composite on Earth and is a recalcitrant but promising renewable substrate for industrial biotechnology applications. Together with cellobiose dehydrogenases (CDHs) an enzymatic system capable of oxidative cellulose cleavage is formed, which increases the efficiency of cellulases and put LPMOs at focus of biofuel research.</text>
</comment>
<comment type="similarity">
    <text evidence="7">Belongs to the polysaccharide monooxygenase AA9 family.</text>
</comment>
<keyword id="KW-0119">Carbohydrate metabolism</keyword>
<keyword id="KW-0136">Cellulose degradation</keyword>
<keyword id="KW-0186">Copper</keyword>
<keyword id="KW-1015">Disulfide bond</keyword>
<keyword id="KW-0479">Metal-binding</keyword>
<keyword id="KW-0503">Monooxygenase</keyword>
<keyword id="KW-0560">Oxidoreductase</keyword>
<keyword id="KW-0624">Polysaccharide degradation</keyword>
<keyword id="KW-0964">Secreted</keyword>
<keyword id="KW-0732">Signal</keyword>
<evidence type="ECO:0000250" key="1">
    <source>
        <dbReference type="UniProtKB" id="Q1K8B6"/>
    </source>
</evidence>
<evidence type="ECO:0000250" key="2">
    <source>
        <dbReference type="UniProtKB" id="Q4WP32"/>
    </source>
</evidence>
<evidence type="ECO:0000255" key="3"/>
<evidence type="ECO:0000269" key="4">
    <source>
    </source>
</evidence>
<evidence type="ECO:0000269" key="5">
    <source>
    </source>
</evidence>
<evidence type="ECO:0000303" key="6">
    <source>
    </source>
</evidence>
<evidence type="ECO:0000305" key="7"/>
<evidence type="ECO:0000305" key="8">
    <source>
    </source>
</evidence>
<evidence type="ECO:0000305" key="9">
    <source>
    </source>
</evidence>
<sequence length="225" mass="24418">MLTTTFALLTAALGVSAHYTLPRVGTGSDWQHVRRADNWQNNGFVGDVNSEQIRCFQATPAGAQDVYTVQAGSTVTYHANPSIYHPGPMQFYLARVPDGQDVKSWTGEGAVWFKVYEEQPQFGAQLTWPSNGKSSFEVPIPSCIRAGNYLLRAEHIALHVAQSQGGAQFYISCAQLQVTGGGSTEPSQKVSFPGAYKSTDPGILININYPVPTSYQNPGPAVFRC</sequence>
<proteinExistence type="evidence at protein level"/>